<evidence type="ECO:0000255" key="1">
    <source>
        <dbReference type="HAMAP-Rule" id="MF_00184"/>
    </source>
</evidence>
<evidence type="ECO:0000255" key="2">
    <source>
        <dbReference type="PROSITE-ProRule" id="PRU01228"/>
    </source>
</evidence>
<sequence>MPIITLPNGDQKSFDHPVSVMEVAQSIGPGLAKNTVAGRVNDRLVDACDLITEDSTLQIITPKDEEGLEIIRHSCAHLVGHAVKQLFPEAKMVIGPVIEEGFYYDIWMPRPFTLDDMAAIEERMKKLIDQDYDVIKKMTPRDEVIKVFTDRGEEYKLRLVEDMPEEKAMGLYYHQEYVDMCRGPHVPNTKFLKSFKLTKISGAYWRGDAKNEQLQRIYGTAWADKKQLAAYIKRIEEAEKRDHRKIGKALDLFHMQEEAPGMVFWHANGWTIYQVLEQYMRKVQQDNGYQEIKTPQIVDFTLWEKSGHAANYAENMFTTHSESRNYAVKPMNCPCHVQVFNQGLKSYRDLPIRLAEFGSCHRNEPSGSLHGIMRVRGFTQDDAHIFCTKEQIGKEVADFIKLTLDVYKDFGFEEVQMKLSTRPEKRVGDDALWDLAEKSLADALDAAGLEWELQPGEGAFYGPKIEFSLKDCLGRVWQCGTIQCDFNLPVRLDASYVTEENERDQPVMLHRAILGSFERFIGILIEHYAGFMPPWLSPVQACVMNITDSQAEASEQVVAKLKENGLRAISDLRNEKIGFKIRERTLERIPYLLVLGDREVEEGTVNVRTRSGKNLGTMSVDAFIDLVKSAVAERGRYIVE</sequence>
<protein>
    <recommendedName>
        <fullName evidence="1">Threonine--tRNA ligase</fullName>
        <ecNumber evidence="1">6.1.1.3</ecNumber>
    </recommendedName>
    <alternativeName>
        <fullName evidence="1">Threonyl-tRNA synthetase</fullName>
        <shortName evidence="1">ThrRS</shortName>
    </alternativeName>
</protein>
<accession>B2HTH0</accession>
<name>SYT_ACIBC</name>
<feature type="chain" id="PRO_1000098533" description="Threonine--tRNA ligase">
    <location>
        <begin position="1"/>
        <end position="640"/>
    </location>
</feature>
<feature type="domain" description="TGS" evidence="2">
    <location>
        <begin position="1"/>
        <end position="61"/>
    </location>
</feature>
<feature type="region of interest" description="Catalytic" evidence="1">
    <location>
        <begin position="242"/>
        <end position="533"/>
    </location>
</feature>
<feature type="binding site" evidence="1">
    <location>
        <position position="333"/>
    </location>
    <ligand>
        <name>Zn(2+)</name>
        <dbReference type="ChEBI" id="CHEBI:29105"/>
    </ligand>
</feature>
<feature type="binding site" evidence="1">
    <location>
        <position position="384"/>
    </location>
    <ligand>
        <name>Zn(2+)</name>
        <dbReference type="ChEBI" id="CHEBI:29105"/>
    </ligand>
</feature>
<feature type="binding site" evidence="1">
    <location>
        <position position="510"/>
    </location>
    <ligand>
        <name>Zn(2+)</name>
        <dbReference type="ChEBI" id="CHEBI:29105"/>
    </ligand>
</feature>
<comment type="function">
    <text evidence="1">Catalyzes the attachment of threonine to tRNA(Thr) in a two-step reaction: L-threonine is first activated by ATP to form Thr-AMP and then transferred to the acceptor end of tRNA(Thr). Also edits incorrectly charged L-seryl-tRNA(Thr).</text>
</comment>
<comment type="catalytic activity">
    <reaction evidence="1">
        <text>tRNA(Thr) + L-threonine + ATP = L-threonyl-tRNA(Thr) + AMP + diphosphate + H(+)</text>
        <dbReference type="Rhea" id="RHEA:24624"/>
        <dbReference type="Rhea" id="RHEA-COMP:9670"/>
        <dbReference type="Rhea" id="RHEA-COMP:9704"/>
        <dbReference type="ChEBI" id="CHEBI:15378"/>
        <dbReference type="ChEBI" id="CHEBI:30616"/>
        <dbReference type="ChEBI" id="CHEBI:33019"/>
        <dbReference type="ChEBI" id="CHEBI:57926"/>
        <dbReference type="ChEBI" id="CHEBI:78442"/>
        <dbReference type="ChEBI" id="CHEBI:78534"/>
        <dbReference type="ChEBI" id="CHEBI:456215"/>
        <dbReference type="EC" id="6.1.1.3"/>
    </reaction>
</comment>
<comment type="cofactor">
    <cofactor evidence="1">
        <name>Zn(2+)</name>
        <dbReference type="ChEBI" id="CHEBI:29105"/>
    </cofactor>
    <text evidence="1">Binds 1 zinc ion per subunit.</text>
</comment>
<comment type="subunit">
    <text evidence="1">Homodimer.</text>
</comment>
<comment type="subcellular location">
    <subcellularLocation>
        <location evidence="1">Cytoplasm</location>
    </subcellularLocation>
</comment>
<comment type="similarity">
    <text evidence="1">Belongs to the class-II aminoacyl-tRNA synthetase family.</text>
</comment>
<organism>
    <name type="scientific">Acinetobacter baumannii (strain ACICU)</name>
    <dbReference type="NCBI Taxonomy" id="405416"/>
    <lineage>
        <taxon>Bacteria</taxon>
        <taxon>Pseudomonadati</taxon>
        <taxon>Pseudomonadota</taxon>
        <taxon>Gammaproteobacteria</taxon>
        <taxon>Moraxellales</taxon>
        <taxon>Moraxellaceae</taxon>
        <taxon>Acinetobacter</taxon>
        <taxon>Acinetobacter calcoaceticus/baumannii complex</taxon>
    </lineage>
</organism>
<dbReference type="EC" id="6.1.1.3" evidence="1"/>
<dbReference type="EMBL" id="CP000863">
    <property type="protein sequence ID" value="ACC55907.1"/>
    <property type="molecule type" value="Genomic_DNA"/>
</dbReference>
<dbReference type="RefSeq" id="WP_001121792.1">
    <property type="nucleotide sequence ID" value="NZ_CP031380.1"/>
</dbReference>
<dbReference type="SMR" id="B2HTH0"/>
<dbReference type="KEGG" id="abc:ACICU_00595"/>
<dbReference type="HOGENOM" id="CLU_008554_0_1_6"/>
<dbReference type="Proteomes" id="UP000008839">
    <property type="component" value="Chromosome"/>
</dbReference>
<dbReference type="GO" id="GO:0005829">
    <property type="term" value="C:cytosol"/>
    <property type="evidence" value="ECO:0007669"/>
    <property type="project" value="TreeGrafter"/>
</dbReference>
<dbReference type="GO" id="GO:0005524">
    <property type="term" value="F:ATP binding"/>
    <property type="evidence" value="ECO:0007669"/>
    <property type="project" value="UniProtKB-UniRule"/>
</dbReference>
<dbReference type="GO" id="GO:0046872">
    <property type="term" value="F:metal ion binding"/>
    <property type="evidence" value="ECO:0007669"/>
    <property type="project" value="UniProtKB-KW"/>
</dbReference>
<dbReference type="GO" id="GO:0004829">
    <property type="term" value="F:threonine-tRNA ligase activity"/>
    <property type="evidence" value="ECO:0007669"/>
    <property type="project" value="UniProtKB-UniRule"/>
</dbReference>
<dbReference type="GO" id="GO:0000049">
    <property type="term" value="F:tRNA binding"/>
    <property type="evidence" value="ECO:0007669"/>
    <property type="project" value="UniProtKB-KW"/>
</dbReference>
<dbReference type="GO" id="GO:0006435">
    <property type="term" value="P:threonyl-tRNA aminoacylation"/>
    <property type="evidence" value="ECO:0007669"/>
    <property type="project" value="UniProtKB-UniRule"/>
</dbReference>
<dbReference type="CDD" id="cd01667">
    <property type="entry name" value="TGS_ThrRS"/>
    <property type="match status" value="1"/>
</dbReference>
<dbReference type="CDD" id="cd00860">
    <property type="entry name" value="ThrRS_anticodon"/>
    <property type="match status" value="1"/>
</dbReference>
<dbReference type="CDD" id="cd00771">
    <property type="entry name" value="ThrRS_core"/>
    <property type="match status" value="1"/>
</dbReference>
<dbReference type="FunFam" id="3.10.20.30:FF:000005">
    <property type="entry name" value="Threonine--tRNA ligase"/>
    <property type="match status" value="1"/>
</dbReference>
<dbReference type="FunFam" id="3.30.54.20:FF:000002">
    <property type="entry name" value="Threonine--tRNA ligase"/>
    <property type="match status" value="1"/>
</dbReference>
<dbReference type="FunFam" id="3.30.930.10:FF:000002">
    <property type="entry name" value="Threonine--tRNA ligase"/>
    <property type="match status" value="1"/>
</dbReference>
<dbReference type="FunFam" id="3.40.50.800:FF:000001">
    <property type="entry name" value="Threonine--tRNA ligase"/>
    <property type="match status" value="1"/>
</dbReference>
<dbReference type="FunFam" id="3.30.980.10:FF:000005">
    <property type="entry name" value="Threonyl-tRNA synthetase, mitochondrial"/>
    <property type="match status" value="1"/>
</dbReference>
<dbReference type="Gene3D" id="3.10.20.30">
    <property type="match status" value="1"/>
</dbReference>
<dbReference type="Gene3D" id="3.30.54.20">
    <property type="match status" value="1"/>
</dbReference>
<dbReference type="Gene3D" id="3.40.50.800">
    <property type="entry name" value="Anticodon-binding domain"/>
    <property type="match status" value="1"/>
</dbReference>
<dbReference type="Gene3D" id="3.30.930.10">
    <property type="entry name" value="Bira Bifunctional Protein, Domain 2"/>
    <property type="match status" value="1"/>
</dbReference>
<dbReference type="Gene3D" id="3.30.980.10">
    <property type="entry name" value="Threonyl-trna Synthetase, Chain A, domain 2"/>
    <property type="match status" value="1"/>
</dbReference>
<dbReference type="HAMAP" id="MF_00184">
    <property type="entry name" value="Thr_tRNA_synth"/>
    <property type="match status" value="1"/>
</dbReference>
<dbReference type="InterPro" id="IPR002314">
    <property type="entry name" value="aa-tRNA-synt_IIb"/>
</dbReference>
<dbReference type="InterPro" id="IPR006195">
    <property type="entry name" value="aa-tRNA-synth_II"/>
</dbReference>
<dbReference type="InterPro" id="IPR045864">
    <property type="entry name" value="aa-tRNA-synth_II/BPL/LPL"/>
</dbReference>
<dbReference type="InterPro" id="IPR004154">
    <property type="entry name" value="Anticodon-bd"/>
</dbReference>
<dbReference type="InterPro" id="IPR036621">
    <property type="entry name" value="Anticodon-bd_dom_sf"/>
</dbReference>
<dbReference type="InterPro" id="IPR012675">
    <property type="entry name" value="Beta-grasp_dom_sf"/>
</dbReference>
<dbReference type="InterPro" id="IPR004095">
    <property type="entry name" value="TGS"/>
</dbReference>
<dbReference type="InterPro" id="IPR012676">
    <property type="entry name" value="TGS-like"/>
</dbReference>
<dbReference type="InterPro" id="IPR002320">
    <property type="entry name" value="Thr-tRNA-ligase_IIa"/>
</dbReference>
<dbReference type="InterPro" id="IPR018163">
    <property type="entry name" value="Thr/Ala-tRNA-synth_IIc_edit"/>
</dbReference>
<dbReference type="InterPro" id="IPR047246">
    <property type="entry name" value="ThrRS_anticodon"/>
</dbReference>
<dbReference type="InterPro" id="IPR033728">
    <property type="entry name" value="ThrRS_core"/>
</dbReference>
<dbReference type="InterPro" id="IPR012947">
    <property type="entry name" value="tRNA_SAD"/>
</dbReference>
<dbReference type="NCBIfam" id="TIGR00418">
    <property type="entry name" value="thrS"/>
    <property type="match status" value="1"/>
</dbReference>
<dbReference type="PANTHER" id="PTHR11451:SF44">
    <property type="entry name" value="THREONINE--TRNA LIGASE, CHLOROPLASTIC_MITOCHONDRIAL 2"/>
    <property type="match status" value="1"/>
</dbReference>
<dbReference type="PANTHER" id="PTHR11451">
    <property type="entry name" value="THREONINE-TRNA LIGASE"/>
    <property type="match status" value="1"/>
</dbReference>
<dbReference type="Pfam" id="PF03129">
    <property type="entry name" value="HGTP_anticodon"/>
    <property type="match status" value="1"/>
</dbReference>
<dbReference type="Pfam" id="PF02824">
    <property type="entry name" value="TGS"/>
    <property type="match status" value="1"/>
</dbReference>
<dbReference type="Pfam" id="PF00587">
    <property type="entry name" value="tRNA-synt_2b"/>
    <property type="match status" value="1"/>
</dbReference>
<dbReference type="Pfam" id="PF07973">
    <property type="entry name" value="tRNA_SAD"/>
    <property type="match status" value="1"/>
</dbReference>
<dbReference type="PRINTS" id="PR01047">
    <property type="entry name" value="TRNASYNTHTHR"/>
</dbReference>
<dbReference type="SMART" id="SM00863">
    <property type="entry name" value="tRNA_SAD"/>
    <property type="match status" value="1"/>
</dbReference>
<dbReference type="SUPFAM" id="SSF52954">
    <property type="entry name" value="Class II aaRS ABD-related"/>
    <property type="match status" value="1"/>
</dbReference>
<dbReference type="SUPFAM" id="SSF55681">
    <property type="entry name" value="Class II aaRS and biotin synthetases"/>
    <property type="match status" value="1"/>
</dbReference>
<dbReference type="SUPFAM" id="SSF81271">
    <property type="entry name" value="TGS-like"/>
    <property type="match status" value="1"/>
</dbReference>
<dbReference type="SUPFAM" id="SSF55186">
    <property type="entry name" value="ThrRS/AlaRS common domain"/>
    <property type="match status" value="1"/>
</dbReference>
<dbReference type="PROSITE" id="PS50862">
    <property type="entry name" value="AA_TRNA_LIGASE_II"/>
    <property type="match status" value="1"/>
</dbReference>
<dbReference type="PROSITE" id="PS51880">
    <property type="entry name" value="TGS"/>
    <property type="match status" value="1"/>
</dbReference>
<keyword id="KW-0030">Aminoacyl-tRNA synthetase</keyword>
<keyword id="KW-0067">ATP-binding</keyword>
<keyword id="KW-0963">Cytoplasm</keyword>
<keyword id="KW-0436">Ligase</keyword>
<keyword id="KW-0479">Metal-binding</keyword>
<keyword id="KW-0547">Nucleotide-binding</keyword>
<keyword id="KW-0648">Protein biosynthesis</keyword>
<keyword id="KW-0694">RNA-binding</keyword>
<keyword id="KW-0820">tRNA-binding</keyword>
<keyword id="KW-0862">Zinc</keyword>
<reference key="1">
    <citation type="journal article" date="2008" name="Antimicrob. Agents Chemother.">
        <title>Whole-genome pyrosequencing of an epidemic multidrug-resistant Acinetobacter baumannii strain belonging to the European clone II group.</title>
        <authorList>
            <person name="Iacono M."/>
            <person name="Villa L."/>
            <person name="Fortini D."/>
            <person name="Bordoni R."/>
            <person name="Imperi F."/>
            <person name="Bonnal R.J."/>
            <person name="Sicheritz-Ponten T."/>
            <person name="De Bellis G."/>
            <person name="Visca P."/>
            <person name="Cassone A."/>
            <person name="Carattoli A."/>
        </authorList>
    </citation>
    <scope>NUCLEOTIDE SEQUENCE [LARGE SCALE GENOMIC DNA]</scope>
    <source>
        <strain>ACICU</strain>
    </source>
</reference>
<proteinExistence type="inferred from homology"/>
<gene>
    <name evidence="1" type="primary">thrS</name>
    <name type="ordered locus">ACICU_00595</name>
</gene>